<organism>
    <name type="scientific">Oryza sativa subsp. indica</name>
    <name type="common">Rice</name>
    <dbReference type="NCBI Taxonomy" id="39946"/>
    <lineage>
        <taxon>Eukaryota</taxon>
        <taxon>Viridiplantae</taxon>
        <taxon>Streptophyta</taxon>
        <taxon>Embryophyta</taxon>
        <taxon>Tracheophyta</taxon>
        <taxon>Spermatophyta</taxon>
        <taxon>Magnoliopsida</taxon>
        <taxon>Liliopsida</taxon>
        <taxon>Poales</taxon>
        <taxon>Poaceae</taxon>
        <taxon>BOP clade</taxon>
        <taxon>Oryzoideae</taxon>
        <taxon>Oryzeae</taxon>
        <taxon>Oryzinae</taxon>
        <taxon>Oryza</taxon>
        <taxon>Oryza sativa</taxon>
    </lineage>
</organism>
<name>PHR2_ORYSI</name>
<dbReference type="EMBL" id="CM000132">
    <property type="protein sequence ID" value="EEC81946.1"/>
    <property type="molecule type" value="Genomic_DNA"/>
</dbReference>
<dbReference type="PDB" id="7D3T">
    <property type="method" value="X-ray"/>
    <property type="resolution" value="2.70 A"/>
    <property type="chains" value="A/B/C/D=180-313"/>
</dbReference>
<dbReference type="PDBsum" id="7D3T"/>
<dbReference type="SMR" id="B8B5N8"/>
<dbReference type="STRING" id="39946.B8B5N8"/>
<dbReference type="EnsemblPlants" id="BGIOSGA025605-TA">
    <property type="protein sequence ID" value="BGIOSGA025605-PA"/>
    <property type="gene ID" value="BGIOSGA025605"/>
</dbReference>
<dbReference type="EnsemblPlants" id="OsGoSa_07g0012390.02">
    <property type="protein sequence ID" value="OsGoSa_07g0012390.02"/>
    <property type="gene ID" value="OsGoSa_07g0012390"/>
</dbReference>
<dbReference type="EnsemblPlants" id="OsGoSa_07g0012390.03">
    <property type="protein sequence ID" value="OsGoSa_07g0012390.03"/>
    <property type="gene ID" value="OsGoSa_07g0012390"/>
</dbReference>
<dbReference type="EnsemblPlants" id="OsIR64_07g0012930.01">
    <property type="protein sequence ID" value="OsIR64_07g0012930.01"/>
    <property type="gene ID" value="OsIR64_07g0012930"/>
</dbReference>
<dbReference type="EnsemblPlants" id="OsIR64_07g0012930.03">
    <property type="protein sequence ID" value="OsIR64_07g0012930.03"/>
    <property type="gene ID" value="OsIR64_07g0012930"/>
</dbReference>
<dbReference type="EnsemblPlants" id="OsKYG_07g0012450.01">
    <property type="protein sequence ID" value="OsKYG_07g0012450.01"/>
    <property type="gene ID" value="OsKYG_07g0012450"/>
</dbReference>
<dbReference type="EnsemblPlants" id="OsKYG_07g0012450.03">
    <property type="protein sequence ID" value="OsKYG_07g0012450.03"/>
    <property type="gene ID" value="OsKYG_07g0012450"/>
</dbReference>
<dbReference type="EnsemblPlants" id="OsLaMu_07g0012460.01">
    <property type="protein sequence ID" value="OsLaMu_07g0012460.01"/>
    <property type="gene ID" value="OsLaMu_07g0012460"/>
</dbReference>
<dbReference type="EnsemblPlants" id="OsLaMu_07g0012460.02">
    <property type="protein sequence ID" value="OsLaMu_07g0012460.02"/>
    <property type="gene ID" value="OsLaMu_07g0012460"/>
</dbReference>
<dbReference type="EnsemblPlants" id="OsLima_07g0012420.01">
    <property type="protein sequence ID" value="OsLima_07g0012420.01"/>
    <property type="gene ID" value="OsLima_07g0012420"/>
</dbReference>
<dbReference type="EnsemblPlants" id="OsLima_07g0012420.03">
    <property type="protein sequence ID" value="OsLima_07g0012420.03"/>
    <property type="gene ID" value="OsLima_07g0012420"/>
</dbReference>
<dbReference type="EnsemblPlants" id="OsLiXu_07g0012650.01">
    <property type="protein sequence ID" value="OsLiXu_07g0012650.01"/>
    <property type="gene ID" value="OsLiXu_07g0012650"/>
</dbReference>
<dbReference type="EnsemblPlants" id="OsLiXu_07g0012650.02">
    <property type="protein sequence ID" value="OsLiXu_07g0012650.02"/>
    <property type="gene ID" value="OsLiXu_07g0012650"/>
</dbReference>
<dbReference type="EnsemblPlants" id="OsMH63_07G012330_01">
    <property type="protein sequence ID" value="OsMH63_07G012330_01"/>
    <property type="gene ID" value="OsMH63_07G012330"/>
</dbReference>
<dbReference type="EnsemblPlants" id="OsMH63_07G012330_03">
    <property type="protein sequence ID" value="OsMH63_07G012330_03"/>
    <property type="gene ID" value="OsMH63_07G012330"/>
</dbReference>
<dbReference type="EnsemblPlants" id="OsPr106_07g0012440.02">
    <property type="protein sequence ID" value="OsPr106_07g0012440.02"/>
    <property type="gene ID" value="OsPr106_07g0012440"/>
</dbReference>
<dbReference type="EnsemblPlants" id="OsPr106_07g0012440.03">
    <property type="protein sequence ID" value="OsPr106_07g0012440.03"/>
    <property type="gene ID" value="OsPr106_07g0012440"/>
</dbReference>
<dbReference type="EnsemblPlants" id="OsZS97_07G012360_02">
    <property type="protein sequence ID" value="OsZS97_07G012360_02"/>
    <property type="gene ID" value="OsZS97_07G012360"/>
</dbReference>
<dbReference type="Gramene" id="BGIOSGA025605-TA">
    <property type="protein sequence ID" value="BGIOSGA025605-PA"/>
    <property type="gene ID" value="BGIOSGA025605"/>
</dbReference>
<dbReference type="Gramene" id="OsGoSa_07g0012390.02">
    <property type="protein sequence ID" value="OsGoSa_07g0012390.02"/>
    <property type="gene ID" value="OsGoSa_07g0012390"/>
</dbReference>
<dbReference type="Gramene" id="OsGoSa_07g0012390.03">
    <property type="protein sequence ID" value="OsGoSa_07g0012390.03"/>
    <property type="gene ID" value="OsGoSa_07g0012390"/>
</dbReference>
<dbReference type="Gramene" id="OsIR64_07g0012930.01">
    <property type="protein sequence ID" value="OsIR64_07g0012930.01"/>
    <property type="gene ID" value="OsIR64_07g0012930"/>
</dbReference>
<dbReference type="Gramene" id="OsIR64_07g0012930.03">
    <property type="protein sequence ID" value="OsIR64_07g0012930.03"/>
    <property type="gene ID" value="OsIR64_07g0012930"/>
</dbReference>
<dbReference type="Gramene" id="OsKYG_07g0012450.01">
    <property type="protein sequence ID" value="OsKYG_07g0012450.01"/>
    <property type="gene ID" value="OsKYG_07g0012450"/>
</dbReference>
<dbReference type="Gramene" id="OsKYG_07g0012450.03">
    <property type="protein sequence ID" value="OsKYG_07g0012450.03"/>
    <property type="gene ID" value="OsKYG_07g0012450"/>
</dbReference>
<dbReference type="Gramene" id="OsLaMu_07g0012460.01">
    <property type="protein sequence ID" value="OsLaMu_07g0012460.01"/>
    <property type="gene ID" value="OsLaMu_07g0012460"/>
</dbReference>
<dbReference type="Gramene" id="OsLaMu_07g0012460.02">
    <property type="protein sequence ID" value="OsLaMu_07g0012460.02"/>
    <property type="gene ID" value="OsLaMu_07g0012460"/>
</dbReference>
<dbReference type="Gramene" id="OsLima_07g0012420.01">
    <property type="protein sequence ID" value="OsLima_07g0012420.01"/>
    <property type="gene ID" value="OsLima_07g0012420"/>
</dbReference>
<dbReference type="Gramene" id="OsLima_07g0012420.03">
    <property type="protein sequence ID" value="OsLima_07g0012420.03"/>
    <property type="gene ID" value="OsLima_07g0012420"/>
</dbReference>
<dbReference type="Gramene" id="OsLiXu_07g0012650.01">
    <property type="protein sequence ID" value="OsLiXu_07g0012650.01"/>
    <property type="gene ID" value="OsLiXu_07g0012650"/>
</dbReference>
<dbReference type="Gramene" id="OsLiXu_07g0012650.02">
    <property type="protein sequence ID" value="OsLiXu_07g0012650.02"/>
    <property type="gene ID" value="OsLiXu_07g0012650"/>
</dbReference>
<dbReference type="Gramene" id="OsMH63_07G012330_01">
    <property type="protein sequence ID" value="OsMH63_07G012330_01"/>
    <property type="gene ID" value="OsMH63_07G012330"/>
</dbReference>
<dbReference type="Gramene" id="OsMH63_07G012330_03">
    <property type="protein sequence ID" value="OsMH63_07G012330_03"/>
    <property type="gene ID" value="OsMH63_07G012330"/>
</dbReference>
<dbReference type="Gramene" id="OsPr106_07g0012440.02">
    <property type="protein sequence ID" value="OsPr106_07g0012440.02"/>
    <property type="gene ID" value="OsPr106_07g0012440"/>
</dbReference>
<dbReference type="Gramene" id="OsPr106_07g0012440.03">
    <property type="protein sequence ID" value="OsPr106_07g0012440.03"/>
    <property type="gene ID" value="OsPr106_07g0012440"/>
</dbReference>
<dbReference type="Gramene" id="OsZS97_07G012360_02">
    <property type="protein sequence ID" value="OsZS97_07G012360_02"/>
    <property type="gene ID" value="OsZS97_07G012360"/>
</dbReference>
<dbReference type="HOGENOM" id="CLU_044541_2_1_1"/>
<dbReference type="OMA" id="NNDSSWC"/>
<dbReference type="OrthoDB" id="551907at2759"/>
<dbReference type="Proteomes" id="UP000007015">
    <property type="component" value="Chromosome 7"/>
</dbReference>
<dbReference type="GO" id="GO:0005737">
    <property type="term" value="C:cytoplasm"/>
    <property type="evidence" value="ECO:0007669"/>
    <property type="project" value="UniProtKB-SubCell"/>
</dbReference>
<dbReference type="GO" id="GO:0005634">
    <property type="term" value="C:nucleus"/>
    <property type="evidence" value="ECO:0007669"/>
    <property type="project" value="UniProtKB-SubCell"/>
</dbReference>
<dbReference type="GO" id="GO:0003677">
    <property type="term" value="F:DNA binding"/>
    <property type="evidence" value="ECO:0007669"/>
    <property type="project" value="UniProtKB-KW"/>
</dbReference>
<dbReference type="GO" id="GO:0003700">
    <property type="term" value="F:DNA-binding transcription factor activity"/>
    <property type="evidence" value="ECO:0007669"/>
    <property type="project" value="InterPro"/>
</dbReference>
<dbReference type="GO" id="GO:0016036">
    <property type="term" value="P:cellular response to phosphate starvation"/>
    <property type="evidence" value="ECO:0007669"/>
    <property type="project" value="EnsemblPlants"/>
</dbReference>
<dbReference type="GO" id="GO:0010966">
    <property type="term" value="P:regulation of phosphate transport"/>
    <property type="evidence" value="ECO:0007669"/>
    <property type="project" value="EnsemblPlants"/>
</dbReference>
<dbReference type="GO" id="GO:0010167">
    <property type="term" value="P:response to nitrate"/>
    <property type="evidence" value="ECO:0007669"/>
    <property type="project" value="EnsemblPlants"/>
</dbReference>
<dbReference type="FunFam" id="1.10.10.60:FF:000002">
    <property type="entry name" value="Myb family transcription factor"/>
    <property type="match status" value="1"/>
</dbReference>
<dbReference type="Gene3D" id="1.10.10.60">
    <property type="entry name" value="Homeodomain-like"/>
    <property type="match status" value="1"/>
</dbReference>
<dbReference type="InterPro" id="IPR009057">
    <property type="entry name" value="Homeodomain-like_sf"/>
</dbReference>
<dbReference type="InterPro" id="IPR025756">
    <property type="entry name" value="Myb_CC_LHEQLE"/>
</dbReference>
<dbReference type="InterPro" id="IPR017930">
    <property type="entry name" value="Myb_dom"/>
</dbReference>
<dbReference type="InterPro" id="IPR006447">
    <property type="entry name" value="Myb_dom_plants"/>
</dbReference>
<dbReference type="InterPro" id="IPR046955">
    <property type="entry name" value="PHR1-like"/>
</dbReference>
<dbReference type="InterPro" id="IPR001005">
    <property type="entry name" value="SANT/Myb"/>
</dbReference>
<dbReference type="NCBIfam" id="TIGR01557">
    <property type="entry name" value="myb_SHAQKYF"/>
    <property type="match status" value="1"/>
</dbReference>
<dbReference type="PANTHER" id="PTHR31499:SF80">
    <property type="entry name" value="HTH MYB-TYPE DOMAIN-CONTAINING PROTEIN"/>
    <property type="match status" value="1"/>
</dbReference>
<dbReference type="PANTHER" id="PTHR31499">
    <property type="entry name" value="MYB FAMILY TRANSCRIPTION FACTOR PHL11"/>
    <property type="match status" value="1"/>
</dbReference>
<dbReference type="Pfam" id="PF14379">
    <property type="entry name" value="Myb_CC_LHEQLE"/>
    <property type="match status" value="1"/>
</dbReference>
<dbReference type="Pfam" id="PF00249">
    <property type="entry name" value="Myb_DNA-binding"/>
    <property type="match status" value="1"/>
</dbReference>
<dbReference type="SUPFAM" id="SSF46689">
    <property type="entry name" value="Homeodomain-like"/>
    <property type="match status" value="1"/>
</dbReference>
<dbReference type="PROSITE" id="PS51294">
    <property type="entry name" value="HTH_MYB"/>
    <property type="match status" value="1"/>
</dbReference>
<comment type="function">
    <text evidence="1">Transcription factor involved in phosphate starvation signaling (By similarity). Binds to P1BS, an imperfect palindromic sequence 5'-GNATATNC-3', to promote the expression of inorganic phosphate (Pi) starvation-responsive genes (By similarity). Functionally redundant with PHR1 and PHR3 in regulating Pi starvation response and Pi homeostasis (By similarity). Involved in both systematic and local Pi-signaling pathways (By similarity). Regulates several Pi transporters (By similarity). PHR2 binding to DNA is repressed redundantly by SPX1, SPX2 and SPX4 in a PI-dependent manner (By similarity). The DNA-binding activity is also repressed by SPX4 (By similarity). Involved in root growth under Pi deprivation (By similarity). Involved in the modulation of Pi response and homeostasis together with RLI1; promotes RLI1 expression in response to nitrate availability, thus triggering the nitrate-induced phosphate response (NIPR) (By similarity).</text>
</comment>
<comment type="subunit">
    <text evidence="1">Interacts (via C-terminus) with SPX4 (via N-terminus) in the presence of inositol polyphosphate (By similarity). Interacts (via C-terminus) with SPX1 and SPX2 (via SPX domain) (By similarity). Interacts with RLI1 in the nucleus (By similarity).</text>
</comment>
<comment type="subcellular location">
    <subcellularLocation>
        <location evidence="2">Nucleus</location>
    </subcellularLocation>
    <subcellularLocation>
        <location evidence="1">Cytoplasm</location>
    </subcellularLocation>
    <text evidence="1">Interaction with SPX4 trap PHR2 within the cytoplasm and affects the nuclear localization.</text>
</comment>
<feature type="chain" id="PRO_0000436718" description="Protein PHOSPHATE STARVATION RESPONSE 2">
    <location>
        <begin position="1"/>
        <end position="426"/>
    </location>
</feature>
<feature type="domain" description="HTH myb-type" evidence="2">
    <location>
        <begin position="243"/>
        <end position="303"/>
    </location>
</feature>
<feature type="DNA-binding region" description="H-T-H motif" evidence="2">
    <location>
        <begin position="274"/>
        <end position="299"/>
    </location>
</feature>
<feature type="region of interest" description="Disordered" evidence="3">
    <location>
        <begin position="27"/>
        <end position="81"/>
    </location>
</feature>
<feature type="region of interest" description="Disordered" evidence="3">
    <location>
        <begin position="96"/>
        <end position="123"/>
    </location>
</feature>
<feature type="region of interest" description="Disordered" evidence="3">
    <location>
        <begin position="198"/>
        <end position="247"/>
    </location>
</feature>
<feature type="region of interest" description="Disordered" evidence="3">
    <location>
        <begin position="302"/>
        <end position="326"/>
    </location>
</feature>
<feature type="region of interest" description="Disordered" evidence="3">
    <location>
        <begin position="382"/>
        <end position="426"/>
    </location>
</feature>
<feature type="compositionally biased region" description="Polar residues" evidence="3">
    <location>
        <begin position="69"/>
        <end position="81"/>
    </location>
</feature>
<feature type="compositionally biased region" description="Low complexity" evidence="3">
    <location>
        <begin position="102"/>
        <end position="119"/>
    </location>
</feature>
<feature type="compositionally biased region" description="Low complexity" evidence="3">
    <location>
        <begin position="205"/>
        <end position="225"/>
    </location>
</feature>
<feature type="compositionally biased region" description="Polar residues" evidence="3">
    <location>
        <begin position="237"/>
        <end position="246"/>
    </location>
</feature>
<feature type="compositionally biased region" description="Basic and acidic residues" evidence="3">
    <location>
        <begin position="303"/>
        <end position="322"/>
    </location>
</feature>
<feature type="compositionally biased region" description="Polar residues" evidence="3">
    <location>
        <begin position="387"/>
        <end position="401"/>
    </location>
</feature>
<feature type="compositionally biased region" description="Polar residues" evidence="3">
    <location>
        <begin position="411"/>
        <end position="426"/>
    </location>
</feature>
<feature type="helix" evidence="5">
    <location>
        <begin position="253"/>
        <end position="265"/>
    </location>
</feature>
<feature type="helix" evidence="5">
    <location>
        <begin position="268"/>
        <end position="271"/>
    </location>
</feature>
<feature type="helix" evidence="5">
    <location>
        <begin position="274"/>
        <end position="281"/>
    </location>
</feature>
<feature type="helix" evidence="5">
    <location>
        <begin position="288"/>
        <end position="299"/>
    </location>
</feature>
<feature type="turn" evidence="5">
    <location>
        <begin position="301"/>
        <end position="303"/>
    </location>
</feature>
<evidence type="ECO:0000250" key="1">
    <source>
        <dbReference type="UniProtKB" id="Q6Z156"/>
    </source>
</evidence>
<evidence type="ECO:0000255" key="2">
    <source>
        <dbReference type="PROSITE-ProRule" id="PRU00625"/>
    </source>
</evidence>
<evidence type="ECO:0000256" key="3">
    <source>
        <dbReference type="SAM" id="MobiDB-lite"/>
    </source>
</evidence>
<evidence type="ECO:0000312" key="4">
    <source>
        <dbReference type="EMBL" id="EEC81946.1"/>
    </source>
</evidence>
<evidence type="ECO:0007829" key="5">
    <source>
        <dbReference type="PDB" id="7D3T"/>
    </source>
</evidence>
<accession>B8B5N8</accession>
<reference key="1">
    <citation type="journal article" date="2005" name="PLoS Biol.">
        <title>The genomes of Oryza sativa: a history of duplications.</title>
        <authorList>
            <person name="Yu J."/>
            <person name="Wang J."/>
            <person name="Lin W."/>
            <person name="Li S."/>
            <person name="Li H."/>
            <person name="Zhou J."/>
            <person name="Ni P."/>
            <person name="Dong W."/>
            <person name="Hu S."/>
            <person name="Zeng C."/>
            <person name="Zhang J."/>
            <person name="Zhang Y."/>
            <person name="Li R."/>
            <person name="Xu Z."/>
            <person name="Li S."/>
            <person name="Li X."/>
            <person name="Zheng H."/>
            <person name="Cong L."/>
            <person name="Lin L."/>
            <person name="Yin J."/>
            <person name="Geng J."/>
            <person name="Li G."/>
            <person name="Shi J."/>
            <person name="Liu J."/>
            <person name="Lv H."/>
            <person name="Li J."/>
            <person name="Wang J."/>
            <person name="Deng Y."/>
            <person name="Ran L."/>
            <person name="Shi X."/>
            <person name="Wang X."/>
            <person name="Wu Q."/>
            <person name="Li C."/>
            <person name="Ren X."/>
            <person name="Wang J."/>
            <person name="Wang X."/>
            <person name="Li D."/>
            <person name="Liu D."/>
            <person name="Zhang X."/>
            <person name="Ji Z."/>
            <person name="Zhao W."/>
            <person name="Sun Y."/>
            <person name="Zhang Z."/>
            <person name="Bao J."/>
            <person name="Han Y."/>
            <person name="Dong L."/>
            <person name="Ji J."/>
            <person name="Chen P."/>
            <person name="Wu S."/>
            <person name="Liu J."/>
            <person name="Xiao Y."/>
            <person name="Bu D."/>
            <person name="Tan J."/>
            <person name="Yang L."/>
            <person name="Ye C."/>
            <person name="Zhang J."/>
            <person name="Xu J."/>
            <person name="Zhou Y."/>
            <person name="Yu Y."/>
            <person name="Zhang B."/>
            <person name="Zhuang S."/>
            <person name="Wei H."/>
            <person name="Liu B."/>
            <person name="Lei M."/>
            <person name="Yu H."/>
            <person name="Li Y."/>
            <person name="Xu H."/>
            <person name="Wei S."/>
            <person name="He X."/>
            <person name="Fang L."/>
            <person name="Zhang Z."/>
            <person name="Zhang Y."/>
            <person name="Huang X."/>
            <person name="Su Z."/>
            <person name="Tong W."/>
            <person name="Li J."/>
            <person name="Tong Z."/>
            <person name="Li S."/>
            <person name="Ye J."/>
            <person name="Wang L."/>
            <person name="Fang L."/>
            <person name="Lei T."/>
            <person name="Chen C.-S."/>
            <person name="Chen H.-C."/>
            <person name="Xu Z."/>
            <person name="Li H."/>
            <person name="Huang H."/>
            <person name="Zhang F."/>
            <person name="Xu H."/>
            <person name="Li N."/>
            <person name="Zhao C."/>
            <person name="Li S."/>
            <person name="Dong L."/>
            <person name="Huang Y."/>
            <person name="Li L."/>
            <person name="Xi Y."/>
            <person name="Qi Q."/>
            <person name="Li W."/>
            <person name="Zhang B."/>
            <person name="Hu W."/>
            <person name="Zhang Y."/>
            <person name="Tian X."/>
            <person name="Jiao Y."/>
            <person name="Liang X."/>
            <person name="Jin J."/>
            <person name="Gao L."/>
            <person name="Zheng W."/>
            <person name="Hao B."/>
            <person name="Liu S.-M."/>
            <person name="Wang W."/>
            <person name="Yuan L."/>
            <person name="Cao M."/>
            <person name="McDermott J."/>
            <person name="Samudrala R."/>
            <person name="Wang J."/>
            <person name="Wong G.K.-S."/>
            <person name="Yang H."/>
        </authorList>
    </citation>
    <scope>NUCLEOTIDE SEQUENCE [LARGE SCALE GENOMIC DNA]</scope>
    <source>
        <strain>cv. 93-11</strain>
    </source>
</reference>
<proteinExistence type="evidence at protein level"/>
<gene>
    <name evidence="1" type="primary">PHR2</name>
    <name evidence="4" type="ORF">OsI_25821</name>
</gene>
<keyword id="KW-0002">3D-structure</keyword>
<keyword id="KW-0963">Cytoplasm</keyword>
<keyword id="KW-0238">DNA-binding</keyword>
<keyword id="KW-0539">Nucleus</keyword>
<keyword id="KW-1185">Reference proteome</keyword>
<keyword id="KW-0804">Transcription</keyword>
<keyword id="KW-0805">Transcription regulation</keyword>
<sequence>MERISTNQLYNSGIPVTVPSPLPAIPATLDENIPRIPDGQNVPRERELRSTPMPPHQNQSTVAPLHGHFQSSTGSVGPLRSSQAIRFSSVSSNEQYTNANPYNSQPPSSGSSSTLNYGSQYGGFEPSLTDFPRDAGPTWCPDPVDGLLGYTDDVPAGNNLTENSSIAAGDELAKQSEWWNDFMNYDWKDIDNTACTETQPQVGPAAQSSVAVHQSAAQQSVSSQSGEPSAVAIPSPSGASNTSNSKTRMRWTPELHERFVDAVNLLGGSEKATPKGVLKLMKADNLTIYHVKSHLQKYRTARYRPELSEGSSEKKAASKEDIPSIDLKGGNFDLTEALRLQLELQKRLHEQLEIQRSLQLRIEEQGKCLQMMLEQQCIPGTDKAVDASTSAEGTKPSSDLPESSAVKDVPENSQNGIAKQTESGDR</sequence>
<protein>
    <recommendedName>
        <fullName evidence="1">Protein PHOSPHATE STARVATION RESPONSE 2</fullName>
        <shortName evidence="1">OsPHR2</shortName>
    </recommendedName>
</protein>